<organism>
    <name type="scientific">Nandina domestica</name>
    <name type="common">Heavenly bamboo</name>
    <dbReference type="NCBI Taxonomy" id="41776"/>
    <lineage>
        <taxon>Eukaryota</taxon>
        <taxon>Viridiplantae</taxon>
        <taxon>Streptophyta</taxon>
        <taxon>Embryophyta</taxon>
        <taxon>Tracheophyta</taxon>
        <taxon>Spermatophyta</taxon>
        <taxon>Magnoliopsida</taxon>
        <taxon>Ranunculales</taxon>
        <taxon>Berberidaceae</taxon>
        <taxon>Nandinoideae</taxon>
        <taxon>Nandineae</taxon>
        <taxon>Nandina</taxon>
    </lineage>
</organism>
<dbReference type="EMBL" id="DQ923117">
    <property type="protein sequence ID" value="ABI49892.1"/>
    <property type="molecule type" value="Genomic_DNA"/>
</dbReference>
<dbReference type="RefSeq" id="YP_740678.1">
    <property type="nucleotide sequence ID" value="NC_008336.1"/>
</dbReference>
<dbReference type="SMR" id="Q09FT3"/>
<dbReference type="GeneID" id="4271689"/>
<dbReference type="GO" id="GO:0009535">
    <property type="term" value="C:chloroplast thylakoid membrane"/>
    <property type="evidence" value="ECO:0007669"/>
    <property type="project" value="UniProtKB-SubCell"/>
</dbReference>
<dbReference type="GO" id="GO:0015979">
    <property type="term" value="P:photosynthesis"/>
    <property type="evidence" value="ECO:0007669"/>
    <property type="project" value="InterPro"/>
</dbReference>
<dbReference type="HAMAP" id="MF_00293">
    <property type="entry name" value="PSII_PsbN"/>
    <property type="match status" value="1"/>
</dbReference>
<dbReference type="InterPro" id="IPR003398">
    <property type="entry name" value="PSII_PsbN"/>
</dbReference>
<dbReference type="PANTHER" id="PTHR35326">
    <property type="entry name" value="PROTEIN PSBN"/>
    <property type="match status" value="1"/>
</dbReference>
<dbReference type="PANTHER" id="PTHR35326:SF3">
    <property type="entry name" value="PROTEIN PSBN"/>
    <property type="match status" value="1"/>
</dbReference>
<dbReference type="Pfam" id="PF02468">
    <property type="entry name" value="PsbN"/>
    <property type="match status" value="1"/>
</dbReference>
<geneLocation type="chloroplast"/>
<gene>
    <name evidence="1" type="primary">psbN</name>
</gene>
<comment type="function">
    <text evidence="1">May play a role in photosystem I and II biogenesis.</text>
</comment>
<comment type="subcellular location">
    <subcellularLocation>
        <location evidence="1">Plastid</location>
        <location evidence="1">Chloroplast thylakoid membrane</location>
        <topology evidence="1">Single-pass membrane protein</topology>
    </subcellularLocation>
</comment>
<comment type="similarity">
    <text evidence="1">Belongs to the PsbN family.</text>
</comment>
<comment type="caution">
    <text evidence="1">Originally thought to be a component of PSII; based on experiments in Synechocystis, N.tabacum and barley, and its absence from PSII in T.elongatus and T.vulcanus, this is probably not true.</text>
</comment>
<feature type="chain" id="PRO_0000362204" description="Protein PsbN">
    <location>
        <begin position="1"/>
        <end position="43"/>
    </location>
</feature>
<feature type="transmembrane region" description="Helical" evidence="1">
    <location>
        <begin position="7"/>
        <end position="27"/>
    </location>
</feature>
<accession>Q09FT3</accession>
<keyword id="KW-0150">Chloroplast</keyword>
<keyword id="KW-0472">Membrane</keyword>
<keyword id="KW-0934">Plastid</keyword>
<keyword id="KW-0793">Thylakoid</keyword>
<keyword id="KW-0812">Transmembrane</keyword>
<keyword id="KW-1133">Transmembrane helix</keyword>
<protein>
    <recommendedName>
        <fullName evidence="1">Protein PsbN</fullName>
    </recommendedName>
</protein>
<evidence type="ECO:0000255" key="1">
    <source>
        <dbReference type="HAMAP-Rule" id="MF_00293"/>
    </source>
</evidence>
<proteinExistence type="inferred from homology"/>
<reference key="1">
    <citation type="journal article" date="2006" name="BMC Plant Biol.">
        <title>Rapid and accurate pyrosequencing of angiosperm plastid genomes.</title>
        <authorList>
            <person name="Moore M.J."/>
            <person name="Dhingra A."/>
            <person name="Soltis P.S."/>
            <person name="Shaw R."/>
            <person name="Farmerie W.G."/>
            <person name="Folta K.M."/>
            <person name="Soltis D.E."/>
        </authorList>
    </citation>
    <scope>NUCLEOTIDE SEQUENCE [LARGE SCALE GENOMIC DNA]</scope>
</reference>
<sequence length="43" mass="4722">METATLVAIFISGLLVSFTGYALYTAFGQPSQQLRDPFEEHGD</sequence>
<name>PSBN_NANDO</name>